<accession>P54656</accession>
<gene>
    <name type="primary">esaI</name>
</gene>
<organism>
    <name type="scientific">Pantoea stewartii subsp. stewartii</name>
    <name type="common">Erwinia stewartii</name>
    <dbReference type="NCBI Taxonomy" id="66271"/>
    <lineage>
        <taxon>Bacteria</taxon>
        <taxon>Pseudomonadati</taxon>
        <taxon>Pseudomonadota</taxon>
        <taxon>Gammaproteobacteria</taxon>
        <taxon>Enterobacterales</taxon>
        <taxon>Erwiniaceae</taxon>
        <taxon>Pantoea</taxon>
    </lineage>
</organism>
<reference key="1">
    <citation type="journal article" date="1995" name="J. Bacteriol.">
        <title>Capsular polysaccharide biosynthesis and pathogenicity in Erwinia stewartii require induction by an N-acylhomoserine lactone autoinducer.</title>
        <authorList>
            <person name="von Bodman S.B."/>
            <person name="Farrand S.K."/>
        </authorList>
    </citation>
    <scope>NUCLEOTIDE SEQUENCE [GENOMIC DNA]</scope>
    <source>
        <strain>SS104</strain>
    </source>
</reference>
<sequence length="210" mass="23844">MLELFDVSYEELQTTRSEELYKLRKKTFSDRLGWEVICSQGMESDEFDGPGTRYILGICEGQLVCSVRFTSLDRPNMITHTFQHCFSDVTLPAYGTESSRFFVDKARARALLGEHYPISQVLFLAMVNWAQNNAYGNIYTIVSRAMLKILTRSGWQIKVIKEAFLTEKERIYLLTLPAGQDDKQQLGGDVVSRTGCPPVAVTTWPLTLPV</sequence>
<protein>
    <recommendedName>
        <fullName>Acyl-homoserine-lactone synthase</fullName>
        <ecNumber>2.3.1.184</ecNumber>
    </recommendedName>
    <alternativeName>
        <fullName>Autoinducer synthesis protein EsaI</fullName>
    </alternativeName>
</protein>
<dbReference type="EC" id="2.3.1.184"/>
<dbReference type="EMBL" id="L32183">
    <property type="protein sequence ID" value="AAA82096.1"/>
    <property type="molecule type" value="Genomic_DNA"/>
</dbReference>
<dbReference type="PIR" id="A57337">
    <property type="entry name" value="A57337"/>
</dbReference>
<dbReference type="RefSeq" id="WP_006119202.1">
    <property type="nucleotide sequence ID" value="NZ_VZPF01000009.1"/>
</dbReference>
<dbReference type="PDB" id="1K4J">
    <property type="method" value="X-ray"/>
    <property type="resolution" value="2.50 A"/>
    <property type="chains" value="A=1-210"/>
</dbReference>
<dbReference type="PDB" id="1KZF">
    <property type="method" value="X-ray"/>
    <property type="resolution" value="1.80 A"/>
    <property type="chains" value="A=1-210"/>
</dbReference>
<dbReference type="PDBsum" id="1K4J"/>
<dbReference type="PDBsum" id="1KZF"/>
<dbReference type="SMR" id="P54656"/>
<dbReference type="EvolutionaryTrace" id="P54656"/>
<dbReference type="GO" id="GO:0061579">
    <property type="term" value="F:N-acyl homoserine lactone synthase activity"/>
    <property type="evidence" value="ECO:0007669"/>
    <property type="project" value="UniProtKB-EC"/>
</dbReference>
<dbReference type="GO" id="GO:0009372">
    <property type="term" value="P:quorum sensing"/>
    <property type="evidence" value="ECO:0007669"/>
    <property type="project" value="UniProtKB-KW"/>
</dbReference>
<dbReference type="GO" id="GO:0007165">
    <property type="term" value="P:signal transduction"/>
    <property type="evidence" value="ECO:0007669"/>
    <property type="project" value="TreeGrafter"/>
</dbReference>
<dbReference type="Gene3D" id="3.40.630.30">
    <property type="match status" value="1"/>
</dbReference>
<dbReference type="InterPro" id="IPR016181">
    <property type="entry name" value="Acyl_CoA_acyltransferase"/>
</dbReference>
<dbReference type="InterPro" id="IPR018311">
    <property type="entry name" value="Autoind_synth_CS"/>
</dbReference>
<dbReference type="InterPro" id="IPR001690">
    <property type="entry name" value="Autoind_synthase"/>
</dbReference>
<dbReference type="PANTHER" id="PTHR39322">
    <property type="entry name" value="ACYL-HOMOSERINE-LACTONE SYNTHASE"/>
    <property type="match status" value="1"/>
</dbReference>
<dbReference type="PANTHER" id="PTHR39322:SF1">
    <property type="entry name" value="ISOVALERYL-HOMOSERINE LACTONE SYNTHASE"/>
    <property type="match status" value="1"/>
</dbReference>
<dbReference type="Pfam" id="PF00765">
    <property type="entry name" value="Autoind_synth"/>
    <property type="match status" value="1"/>
</dbReference>
<dbReference type="PRINTS" id="PR01549">
    <property type="entry name" value="AUTOINDCRSYN"/>
</dbReference>
<dbReference type="SUPFAM" id="SSF55729">
    <property type="entry name" value="Acyl-CoA N-acyltransferases (Nat)"/>
    <property type="match status" value="1"/>
</dbReference>
<dbReference type="PROSITE" id="PS00949">
    <property type="entry name" value="AUTOINDUCER_SYNTH_1"/>
    <property type="match status" value="1"/>
</dbReference>
<dbReference type="PROSITE" id="PS51187">
    <property type="entry name" value="AUTOINDUCER_SYNTH_2"/>
    <property type="match status" value="1"/>
</dbReference>
<proteinExistence type="evidence at protein level"/>
<evidence type="ECO:0000255" key="1">
    <source>
        <dbReference type="PROSITE-ProRule" id="PRU00533"/>
    </source>
</evidence>
<evidence type="ECO:0007829" key="2">
    <source>
        <dbReference type="PDB" id="1KZF"/>
    </source>
</evidence>
<name>ESAI_PANSE</name>
<feature type="chain" id="PRO_0000210884" description="Acyl-homoserine-lactone synthase">
    <location>
        <begin position="1"/>
        <end position="210"/>
    </location>
</feature>
<feature type="strand" evidence="2">
    <location>
        <begin position="2"/>
        <end position="8"/>
    </location>
</feature>
<feature type="helix" evidence="2">
    <location>
        <begin position="9"/>
        <end position="14"/>
    </location>
</feature>
<feature type="helix" evidence="2">
    <location>
        <begin position="29"/>
        <end position="39"/>
    </location>
</feature>
<feature type="strand" evidence="2">
    <location>
        <begin position="53"/>
        <end position="59"/>
    </location>
</feature>
<feature type="strand" evidence="2">
    <location>
        <begin position="62"/>
        <end position="71"/>
    </location>
</feature>
<feature type="helix" evidence="2">
    <location>
        <begin position="77"/>
        <end position="81"/>
    </location>
</feature>
<feature type="helix" evidence="2">
    <location>
        <begin position="83"/>
        <end position="86"/>
    </location>
</feature>
<feature type="strand" evidence="2">
    <location>
        <begin position="96"/>
        <end position="103"/>
    </location>
</feature>
<feature type="helix" evidence="2">
    <location>
        <begin position="105"/>
        <end position="112"/>
    </location>
</feature>
<feature type="helix" evidence="2">
    <location>
        <begin position="118"/>
        <end position="132"/>
    </location>
</feature>
<feature type="strand" evidence="2">
    <location>
        <begin position="136"/>
        <end position="143"/>
    </location>
</feature>
<feature type="helix" evidence="2">
    <location>
        <begin position="144"/>
        <end position="153"/>
    </location>
</feature>
<feature type="strand" evidence="2">
    <location>
        <begin position="158"/>
        <end position="168"/>
    </location>
</feature>
<feature type="strand" evidence="2">
    <location>
        <begin position="170"/>
        <end position="177"/>
    </location>
</feature>
<feature type="helix" evidence="2">
    <location>
        <begin position="180"/>
        <end position="194"/>
    </location>
</feature>
<feature type="helix" evidence="2">
    <location>
        <begin position="198"/>
        <end position="201"/>
    </location>
</feature>
<feature type="strand" evidence="2">
    <location>
        <begin position="202"/>
        <end position="208"/>
    </location>
</feature>
<comment type="function">
    <text>Required for the synthesis of OHHL (N-(3-oxohexanoyl)-L-homoserine lactone), an autoinducer molecule which binds to EsaR. OHHL is necessary for biosynthesis of EPS virulence factor (extracellular heteropolysaccharide) which plays a role in the development of Stewart's wilt on sweet corn.</text>
</comment>
<comment type="catalytic activity">
    <reaction>
        <text>a fatty acyl-[ACP] + S-adenosyl-L-methionine = an N-acyl-L-homoserine lactone + S-methyl-5'-thioadenosine + holo-[ACP] + H(+)</text>
        <dbReference type="Rhea" id="RHEA:10096"/>
        <dbReference type="Rhea" id="RHEA-COMP:9685"/>
        <dbReference type="Rhea" id="RHEA-COMP:14125"/>
        <dbReference type="ChEBI" id="CHEBI:15378"/>
        <dbReference type="ChEBI" id="CHEBI:17509"/>
        <dbReference type="ChEBI" id="CHEBI:55474"/>
        <dbReference type="ChEBI" id="CHEBI:59789"/>
        <dbReference type="ChEBI" id="CHEBI:64479"/>
        <dbReference type="ChEBI" id="CHEBI:138651"/>
        <dbReference type="EC" id="2.3.1.184"/>
    </reaction>
</comment>
<comment type="similarity">
    <text evidence="1">Belongs to the autoinducer synthase family.</text>
</comment>
<keyword id="KW-0002">3D-structure</keyword>
<keyword id="KW-0071">Autoinducer synthesis</keyword>
<keyword id="KW-0673">Quorum sensing</keyword>
<keyword id="KW-0949">S-adenosyl-L-methionine</keyword>
<keyword id="KW-0808">Transferase</keyword>
<keyword id="KW-0843">Virulence</keyword>